<dbReference type="EC" id="7.1.1.-" evidence="1"/>
<dbReference type="EMBL" id="CU928164">
    <property type="protein sequence ID" value="CAR18559.1"/>
    <property type="molecule type" value="Genomic_DNA"/>
</dbReference>
<dbReference type="RefSeq" id="WP_000247878.1">
    <property type="nucleotide sequence ID" value="NC_011750.1"/>
</dbReference>
<dbReference type="RefSeq" id="YP_002408389.1">
    <property type="nucleotide sequence ID" value="NC_011750.1"/>
</dbReference>
<dbReference type="SMR" id="B7NNW5"/>
<dbReference type="STRING" id="585057.ECIAI39_2433"/>
<dbReference type="GeneID" id="93774888"/>
<dbReference type="KEGG" id="ect:ECIAI39_2433"/>
<dbReference type="PATRIC" id="fig|585057.6.peg.2535"/>
<dbReference type="HOGENOM" id="CLU_015134_3_2_6"/>
<dbReference type="Proteomes" id="UP000000749">
    <property type="component" value="Chromosome"/>
</dbReference>
<dbReference type="GO" id="GO:0030964">
    <property type="term" value="C:NADH dehydrogenase complex"/>
    <property type="evidence" value="ECO:0007669"/>
    <property type="project" value="InterPro"/>
</dbReference>
<dbReference type="GO" id="GO:0005886">
    <property type="term" value="C:plasma membrane"/>
    <property type="evidence" value="ECO:0007669"/>
    <property type="project" value="UniProtKB-SubCell"/>
</dbReference>
<dbReference type="GO" id="GO:0051287">
    <property type="term" value="F:NAD binding"/>
    <property type="evidence" value="ECO:0007669"/>
    <property type="project" value="InterPro"/>
</dbReference>
<dbReference type="GO" id="GO:0008137">
    <property type="term" value="F:NADH dehydrogenase (ubiquinone) activity"/>
    <property type="evidence" value="ECO:0007669"/>
    <property type="project" value="InterPro"/>
</dbReference>
<dbReference type="GO" id="GO:0050136">
    <property type="term" value="F:NADH:ubiquinone reductase (non-electrogenic) activity"/>
    <property type="evidence" value="ECO:0007669"/>
    <property type="project" value="UniProtKB-UniRule"/>
</dbReference>
<dbReference type="GO" id="GO:0048038">
    <property type="term" value="F:quinone binding"/>
    <property type="evidence" value="ECO:0007669"/>
    <property type="project" value="UniProtKB-KW"/>
</dbReference>
<dbReference type="FunFam" id="1.10.645.10:FF:000001">
    <property type="entry name" value="NADH-quinone oxidoreductase subunit C/D"/>
    <property type="match status" value="1"/>
</dbReference>
<dbReference type="FunFam" id="3.30.460.80:FF:000001">
    <property type="entry name" value="NADH-quinone oxidoreductase subunit C/D"/>
    <property type="match status" value="1"/>
</dbReference>
<dbReference type="Gene3D" id="1.10.645.10">
    <property type="entry name" value="Cytochrome-c3 Hydrogenase, chain B"/>
    <property type="match status" value="1"/>
</dbReference>
<dbReference type="Gene3D" id="3.30.460.80">
    <property type="entry name" value="NADH:ubiquinone oxidoreductase, 30kDa subunit"/>
    <property type="match status" value="1"/>
</dbReference>
<dbReference type="HAMAP" id="MF_01357">
    <property type="entry name" value="NDH1_NuoC"/>
    <property type="match status" value="1"/>
</dbReference>
<dbReference type="HAMAP" id="MF_01359">
    <property type="entry name" value="NDH1_NuoCD_1"/>
    <property type="match status" value="1"/>
</dbReference>
<dbReference type="HAMAP" id="MF_01358">
    <property type="entry name" value="NDH1_NuoD"/>
    <property type="match status" value="1"/>
</dbReference>
<dbReference type="InterPro" id="IPR010218">
    <property type="entry name" value="NADH_DH_suC"/>
</dbReference>
<dbReference type="InterPro" id="IPR023062">
    <property type="entry name" value="NADH_DH_suCD"/>
</dbReference>
<dbReference type="InterPro" id="IPR001135">
    <property type="entry name" value="NADH_Q_OxRdtase_suD"/>
</dbReference>
<dbReference type="InterPro" id="IPR037232">
    <property type="entry name" value="NADH_quin_OxRdtase_su_C/D-like"/>
</dbReference>
<dbReference type="InterPro" id="IPR001268">
    <property type="entry name" value="NADH_UbQ_OxRdtase_30kDa_su"/>
</dbReference>
<dbReference type="InterPro" id="IPR014029">
    <property type="entry name" value="NADH_UbQ_OxRdtase_49kDa_CS"/>
</dbReference>
<dbReference type="InterPro" id="IPR020396">
    <property type="entry name" value="NADH_UbQ_OxRdtase_CS"/>
</dbReference>
<dbReference type="InterPro" id="IPR022885">
    <property type="entry name" value="NDH1_su_D/H"/>
</dbReference>
<dbReference type="InterPro" id="IPR029014">
    <property type="entry name" value="NiFe-Hase_large"/>
</dbReference>
<dbReference type="NCBIfam" id="TIGR01961">
    <property type="entry name" value="NuoC_fam"/>
    <property type="match status" value="1"/>
</dbReference>
<dbReference type="NCBIfam" id="TIGR01962">
    <property type="entry name" value="NuoD"/>
    <property type="match status" value="1"/>
</dbReference>
<dbReference type="NCBIfam" id="NF004739">
    <property type="entry name" value="PRK06075.1"/>
    <property type="match status" value="1"/>
</dbReference>
<dbReference type="NCBIfam" id="NF008728">
    <property type="entry name" value="PRK11742.1"/>
    <property type="match status" value="1"/>
</dbReference>
<dbReference type="PANTHER" id="PTHR11993:SF45">
    <property type="entry name" value="NADH-QUINONE OXIDOREDUCTASE SUBUNIT C_D"/>
    <property type="match status" value="1"/>
</dbReference>
<dbReference type="PANTHER" id="PTHR11993">
    <property type="entry name" value="NADH-UBIQUINONE OXIDOREDUCTASE 49 KDA SUBUNIT"/>
    <property type="match status" value="1"/>
</dbReference>
<dbReference type="Pfam" id="PF00329">
    <property type="entry name" value="Complex1_30kDa"/>
    <property type="match status" value="1"/>
</dbReference>
<dbReference type="Pfam" id="PF00346">
    <property type="entry name" value="Complex1_49kDa"/>
    <property type="match status" value="1"/>
</dbReference>
<dbReference type="SUPFAM" id="SSF56762">
    <property type="entry name" value="HydB/Nqo4-like"/>
    <property type="match status" value="1"/>
</dbReference>
<dbReference type="SUPFAM" id="SSF143243">
    <property type="entry name" value="Nqo5-like"/>
    <property type="match status" value="1"/>
</dbReference>
<dbReference type="PROSITE" id="PS00542">
    <property type="entry name" value="COMPLEX1_30K"/>
    <property type="match status" value="1"/>
</dbReference>
<dbReference type="PROSITE" id="PS00535">
    <property type="entry name" value="COMPLEX1_49K"/>
    <property type="match status" value="1"/>
</dbReference>
<feature type="chain" id="PRO_1000143686" description="NADH-quinone oxidoreductase subunit C/D">
    <location>
        <begin position="1"/>
        <end position="600"/>
    </location>
</feature>
<feature type="region of interest" description="NADH dehydrogenase I subunit C" evidence="1">
    <location>
        <begin position="1"/>
        <end position="190"/>
    </location>
</feature>
<feature type="region of interest" description="NADH dehydrogenase I subunit D" evidence="1">
    <location>
        <begin position="214"/>
        <end position="600"/>
    </location>
</feature>
<accession>B7NNW5</accession>
<comment type="function">
    <text evidence="1">NDH-1 shuttles electrons from NADH, via FMN and iron-sulfur (Fe-S) centers, to quinones in the respiratory chain. The immediate electron acceptor for the enzyme in this species is believed to be ubiquinone. Couples the redox reaction to proton translocation (for every two electrons transferred, four hydrogen ions are translocated across the cytoplasmic membrane), and thus conserves the redox energy in a proton gradient.</text>
</comment>
<comment type="catalytic activity">
    <reaction evidence="1">
        <text>a quinone + NADH + 5 H(+)(in) = a quinol + NAD(+) + 4 H(+)(out)</text>
        <dbReference type="Rhea" id="RHEA:57888"/>
        <dbReference type="ChEBI" id="CHEBI:15378"/>
        <dbReference type="ChEBI" id="CHEBI:24646"/>
        <dbReference type="ChEBI" id="CHEBI:57540"/>
        <dbReference type="ChEBI" id="CHEBI:57945"/>
        <dbReference type="ChEBI" id="CHEBI:132124"/>
    </reaction>
</comment>
<comment type="subunit">
    <text evidence="1">NDH-1 is composed of 13 different subunits. Subunits NuoB, CD, E, F, and G constitute the peripheral sector of the complex.</text>
</comment>
<comment type="subcellular location">
    <subcellularLocation>
        <location evidence="1">Cell inner membrane</location>
        <topology evidence="1">Peripheral membrane protein</topology>
        <orientation evidence="1">Cytoplasmic side</orientation>
    </subcellularLocation>
</comment>
<comment type="similarity">
    <text evidence="1">In the N-terminal section; belongs to the complex I 30 kDa subunit family.</text>
</comment>
<comment type="similarity">
    <text evidence="1">In the C-terminal section; belongs to the complex I 49 kDa subunit family.</text>
</comment>
<evidence type="ECO:0000255" key="1">
    <source>
        <dbReference type="HAMAP-Rule" id="MF_01359"/>
    </source>
</evidence>
<reference key="1">
    <citation type="journal article" date="2009" name="PLoS Genet.">
        <title>Organised genome dynamics in the Escherichia coli species results in highly diverse adaptive paths.</title>
        <authorList>
            <person name="Touchon M."/>
            <person name="Hoede C."/>
            <person name="Tenaillon O."/>
            <person name="Barbe V."/>
            <person name="Baeriswyl S."/>
            <person name="Bidet P."/>
            <person name="Bingen E."/>
            <person name="Bonacorsi S."/>
            <person name="Bouchier C."/>
            <person name="Bouvet O."/>
            <person name="Calteau A."/>
            <person name="Chiapello H."/>
            <person name="Clermont O."/>
            <person name="Cruveiller S."/>
            <person name="Danchin A."/>
            <person name="Diard M."/>
            <person name="Dossat C."/>
            <person name="Karoui M.E."/>
            <person name="Frapy E."/>
            <person name="Garry L."/>
            <person name="Ghigo J.M."/>
            <person name="Gilles A.M."/>
            <person name="Johnson J."/>
            <person name="Le Bouguenec C."/>
            <person name="Lescat M."/>
            <person name="Mangenot S."/>
            <person name="Martinez-Jehanne V."/>
            <person name="Matic I."/>
            <person name="Nassif X."/>
            <person name="Oztas S."/>
            <person name="Petit M.A."/>
            <person name="Pichon C."/>
            <person name="Rouy Z."/>
            <person name="Ruf C.S."/>
            <person name="Schneider D."/>
            <person name="Tourret J."/>
            <person name="Vacherie B."/>
            <person name="Vallenet D."/>
            <person name="Medigue C."/>
            <person name="Rocha E.P.C."/>
            <person name="Denamur E."/>
        </authorList>
    </citation>
    <scope>NUCLEOTIDE SEQUENCE [LARGE SCALE GENOMIC DNA]</scope>
    <source>
        <strain>IAI39 / ExPEC</strain>
    </source>
</reference>
<proteinExistence type="inferred from homology"/>
<gene>
    <name evidence="1" type="primary">nuoC</name>
    <name evidence="1" type="synonym">nuoCD</name>
    <name evidence="1" type="synonym">nuoD</name>
    <name type="ordered locus">ECIAI39_2433</name>
</gene>
<sequence>MVNNMTDLTAQEPAWQTRDHLDDPVIGELRNRFGPDAFTVQATRTGVPVVWIKREQLLEVGDFLKKLPKPYVMLFDLHGMDERLRTHREGLPAADFSVFYHLISIDRNRDIMLKVALAENDLHVPTFTKLFPNANWYERETWDLFGITFDGHPNLRRIMMPQTWKGHPLRKDYPARATEFSPFELTKAKQDLEMEALTFKPEEWGMKRGTENEDFMFLNLGPNHPSAHGAFRIVLQLDGEEIVDCVPDIGYHHRGAEKMGERQSWHSYIPYTDRIEYLGGCVNEMPYVLAVEKLAGITVPDRVNVIRVMLSELFRINSHLLYISTFIQDVGAMTPVFFAFTDRQKIYDLVEAITGFRMHPAWFRIGGVAHDLPRGWDRLLREFLDWMPKRLASYEKAALQNTILKGRSQGVAAYGAKEALEWGTTGAGLRATGIDFDVRKARPYSGYENFDFEIPVGGGVSDCYTRVMLKVEELRQSLRILEQCLNNMPEGPFKADHPLTTPPPKERTLQHIETLITHFLQVSWGPVMPANESFQMIEATKGINSYYLTSDGSTMSYRTRIRTPSYAHLQQIPAAIRGSLVSDLIVYLGSIDFVMSDVDR</sequence>
<organism>
    <name type="scientific">Escherichia coli O7:K1 (strain IAI39 / ExPEC)</name>
    <dbReference type="NCBI Taxonomy" id="585057"/>
    <lineage>
        <taxon>Bacteria</taxon>
        <taxon>Pseudomonadati</taxon>
        <taxon>Pseudomonadota</taxon>
        <taxon>Gammaproteobacteria</taxon>
        <taxon>Enterobacterales</taxon>
        <taxon>Enterobacteriaceae</taxon>
        <taxon>Escherichia</taxon>
    </lineage>
</organism>
<name>NUOCD_ECO7I</name>
<keyword id="KW-0997">Cell inner membrane</keyword>
<keyword id="KW-1003">Cell membrane</keyword>
<keyword id="KW-0472">Membrane</keyword>
<keyword id="KW-0511">Multifunctional enzyme</keyword>
<keyword id="KW-0520">NAD</keyword>
<keyword id="KW-0874">Quinone</keyword>
<keyword id="KW-1278">Translocase</keyword>
<keyword id="KW-0813">Transport</keyword>
<keyword id="KW-0830">Ubiquinone</keyword>
<protein>
    <recommendedName>
        <fullName evidence="1">NADH-quinone oxidoreductase subunit C/D</fullName>
        <ecNumber evidence="1">7.1.1.-</ecNumber>
    </recommendedName>
    <alternativeName>
        <fullName evidence="1">NADH dehydrogenase I subunit C/D</fullName>
    </alternativeName>
    <alternativeName>
        <fullName evidence="1">NDH-1 subunit C/D</fullName>
    </alternativeName>
</protein>